<organism>
    <name type="scientific">Buchnera aphidicola subsp. Acyrthosiphon pisum (strain Tuc7)</name>
    <dbReference type="NCBI Taxonomy" id="561501"/>
    <lineage>
        <taxon>Bacteria</taxon>
        <taxon>Pseudomonadati</taxon>
        <taxon>Pseudomonadota</taxon>
        <taxon>Gammaproteobacteria</taxon>
        <taxon>Enterobacterales</taxon>
        <taxon>Erwiniaceae</taxon>
        <taxon>Buchnera</taxon>
    </lineage>
</organism>
<sequence length="324" mass="37880">MKKKIWKSSASIEDLIKRSNIISNIRLFFSKKNILEVETPILSRSTVTDVHLTSFETNYISSDNIDELKLWLTTSPEYHMKRLLASESGSIYQICHSFRNKELGRYHNPEFTMLEWYQPFCSMKKFIKEIDIFLQIILKCNKSDKVSYQDLFIDFLKIDPLCANLLELHQISKKLKLDHLTHSENNLNKLIQLLFTLKIEPNIGKEKPLFVYHFPAEQASLAAINLKDPRISERFEIFFKGIELGNGFYELIDVNEQKKRFIRDNKERRSMNLPIRKIDNFFLSALSYGLPPCSGVAIGLDRLIMLILNKKSIHEVIAFPVDRC</sequence>
<name>EPMA_BUCAT</name>
<protein>
    <recommendedName>
        <fullName evidence="1">Elongation factor P--(R)-beta-lysine ligase</fullName>
        <shortName evidence="1">EF-P--(R)-beta-lysine ligase</shortName>
        <ecNumber evidence="1">6.3.2.-</ecNumber>
    </recommendedName>
    <alternativeName>
        <fullName evidence="1">EF-P post-translational modification enzyme A</fullName>
    </alternativeName>
    <alternativeName>
        <fullName evidence="1">EF-P-lysine lysyltransferase</fullName>
    </alternativeName>
</protein>
<feature type="chain" id="PRO_1000199253" description="Elongation factor P--(R)-beta-lysine ligase">
    <location>
        <begin position="1"/>
        <end position="324"/>
    </location>
</feature>
<feature type="binding site" evidence="1">
    <location>
        <begin position="75"/>
        <end position="77"/>
    </location>
    <ligand>
        <name>substrate</name>
    </ligand>
</feature>
<feature type="binding site" evidence="1">
    <location>
        <begin position="99"/>
        <end position="101"/>
    </location>
    <ligand>
        <name>ATP</name>
        <dbReference type="ChEBI" id="CHEBI:30616"/>
    </ligand>
</feature>
<feature type="binding site" evidence="1">
    <location>
        <position position="108"/>
    </location>
    <ligand>
        <name>ATP</name>
        <dbReference type="ChEBI" id="CHEBI:30616"/>
    </ligand>
</feature>
<feature type="binding site" evidence="1">
    <location>
        <position position="117"/>
    </location>
    <ligand>
        <name>substrate</name>
    </ligand>
</feature>
<feature type="binding site" evidence="1">
    <location>
        <begin position="243"/>
        <end position="244"/>
    </location>
    <ligand>
        <name>ATP</name>
        <dbReference type="ChEBI" id="CHEBI:30616"/>
    </ligand>
</feature>
<feature type="binding site" evidence="1">
    <location>
        <position position="250"/>
    </location>
    <ligand>
        <name>substrate</name>
    </ligand>
</feature>
<feature type="binding site" evidence="1">
    <location>
        <position position="299"/>
    </location>
    <ligand>
        <name>ATP</name>
        <dbReference type="ChEBI" id="CHEBI:30616"/>
    </ligand>
</feature>
<evidence type="ECO:0000255" key="1">
    <source>
        <dbReference type="HAMAP-Rule" id="MF_00174"/>
    </source>
</evidence>
<keyword id="KW-0067">ATP-binding</keyword>
<keyword id="KW-0436">Ligase</keyword>
<keyword id="KW-0547">Nucleotide-binding</keyword>
<gene>
    <name evidence="1" type="primary">epmA</name>
    <name type="synonym">yjeA</name>
    <name type="ordered locus">BUAPTUC7_576</name>
</gene>
<reference key="1">
    <citation type="journal article" date="2009" name="Science">
        <title>The dynamics and time scale of ongoing genomic erosion in symbiotic bacteria.</title>
        <authorList>
            <person name="Moran N.A."/>
            <person name="McLaughlin H.J."/>
            <person name="Sorek R."/>
        </authorList>
    </citation>
    <scope>NUCLEOTIDE SEQUENCE [LARGE SCALE GENOMIC DNA]</scope>
    <source>
        <strain>Tuc7</strain>
    </source>
</reference>
<dbReference type="EC" id="6.3.2.-" evidence="1"/>
<dbReference type="EMBL" id="CP001158">
    <property type="protein sequence ID" value="ACL30367.1"/>
    <property type="molecule type" value="Genomic_DNA"/>
</dbReference>
<dbReference type="RefSeq" id="WP_012619396.1">
    <property type="nucleotide sequence ID" value="NC_011834.1"/>
</dbReference>
<dbReference type="SMR" id="B8D8A2"/>
<dbReference type="KEGG" id="bau:BUAPTUC7_576"/>
<dbReference type="HOGENOM" id="CLU_008255_1_1_6"/>
<dbReference type="GO" id="GO:0005829">
    <property type="term" value="C:cytosol"/>
    <property type="evidence" value="ECO:0007669"/>
    <property type="project" value="TreeGrafter"/>
</dbReference>
<dbReference type="GO" id="GO:0016880">
    <property type="term" value="F:acid-ammonia (or amide) ligase activity"/>
    <property type="evidence" value="ECO:0007669"/>
    <property type="project" value="UniProtKB-UniRule"/>
</dbReference>
<dbReference type="GO" id="GO:0005524">
    <property type="term" value="F:ATP binding"/>
    <property type="evidence" value="ECO:0007669"/>
    <property type="project" value="UniProtKB-UniRule"/>
</dbReference>
<dbReference type="GO" id="GO:0004824">
    <property type="term" value="F:lysine-tRNA ligase activity"/>
    <property type="evidence" value="ECO:0007669"/>
    <property type="project" value="InterPro"/>
</dbReference>
<dbReference type="GO" id="GO:0000049">
    <property type="term" value="F:tRNA binding"/>
    <property type="evidence" value="ECO:0007669"/>
    <property type="project" value="TreeGrafter"/>
</dbReference>
<dbReference type="GO" id="GO:0006430">
    <property type="term" value="P:lysyl-tRNA aminoacylation"/>
    <property type="evidence" value="ECO:0007669"/>
    <property type="project" value="InterPro"/>
</dbReference>
<dbReference type="FunFam" id="3.30.930.10:FF:000017">
    <property type="entry name" value="Elongation factor P--(R)-beta-lysine ligase"/>
    <property type="match status" value="1"/>
</dbReference>
<dbReference type="Gene3D" id="3.30.930.10">
    <property type="entry name" value="Bira Bifunctional Protein, Domain 2"/>
    <property type="match status" value="1"/>
</dbReference>
<dbReference type="HAMAP" id="MF_00174">
    <property type="entry name" value="EF_P_modif_A"/>
    <property type="match status" value="1"/>
</dbReference>
<dbReference type="InterPro" id="IPR004364">
    <property type="entry name" value="Aa-tRNA-synt_II"/>
</dbReference>
<dbReference type="InterPro" id="IPR006195">
    <property type="entry name" value="aa-tRNA-synth_II"/>
</dbReference>
<dbReference type="InterPro" id="IPR045864">
    <property type="entry name" value="aa-tRNA-synth_II/BPL/LPL"/>
</dbReference>
<dbReference type="InterPro" id="IPR004525">
    <property type="entry name" value="EpmA"/>
</dbReference>
<dbReference type="InterPro" id="IPR018149">
    <property type="entry name" value="Lys-tRNA-synth_II_C"/>
</dbReference>
<dbReference type="NCBIfam" id="TIGR00462">
    <property type="entry name" value="genX"/>
    <property type="match status" value="1"/>
</dbReference>
<dbReference type="NCBIfam" id="NF006828">
    <property type="entry name" value="PRK09350.1"/>
    <property type="match status" value="1"/>
</dbReference>
<dbReference type="PANTHER" id="PTHR42918:SF6">
    <property type="entry name" value="ELONGATION FACTOR P--(R)-BETA-LYSINE LIGASE"/>
    <property type="match status" value="1"/>
</dbReference>
<dbReference type="PANTHER" id="PTHR42918">
    <property type="entry name" value="LYSYL-TRNA SYNTHETASE"/>
    <property type="match status" value="1"/>
</dbReference>
<dbReference type="Pfam" id="PF00152">
    <property type="entry name" value="tRNA-synt_2"/>
    <property type="match status" value="1"/>
</dbReference>
<dbReference type="PRINTS" id="PR00982">
    <property type="entry name" value="TRNASYNTHLYS"/>
</dbReference>
<dbReference type="SUPFAM" id="SSF55681">
    <property type="entry name" value="Class II aaRS and biotin synthetases"/>
    <property type="match status" value="1"/>
</dbReference>
<dbReference type="PROSITE" id="PS50862">
    <property type="entry name" value="AA_TRNA_LIGASE_II"/>
    <property type="match status" value="1"/>
</dbReference>
<accession>B8D8A2</accession>
<comment type="function">
    <text evidence="1">With EpmB is involved in the beta-lysylation step of the post-translational modification of translation elongation factor P (EF-P). Catalyzes the ATP-dependent activation of (R)-beta-lysine produced by EpmB, forming a lysyl-adenylate, from which the beta-lysyl moiety is then transferred to the epsilon-amino group of a conserved specific lysine residue in EF-P.</text>
</comment>
<comment type="catalytic activity">
    <reaction evidence="1">
        <text>D-beta-lysine + L-lysyl-[protein] + ATP = N(6)-((3R)-3,6-diaminohexanoyl)-L-lysyl-[protein] + AMP + diphosphate + H(+)</text>
        <dbReference type="Rhea" id="RHEA:83435"/>
        <dbReference type="Rhea" id="RHEA-COMP:9752"/>
        <dbReference type="Rhea" id="RHEA-COMP:20131"/>
        <dbReference type="ChEBI" id="CHEBI:15378"/>
        <dbReference type="ChEBI" id="CHEBI:29969"/>
        <dbReference type="ChEBI" id="CHEBI:30616"/>
        <dbReference type="ChEBI" id="CHEBI:33019"/>
        <dbReference type="ChEBI" id="CHEBI:84138"/>
        <dbReference type="ChEBI" id="CHEBI:156053"/>
        <dbReference type="ChEBI" id="CHEBI:456215"/>
    </reaction>
    <physiologicalReaction direction="left-to-right" evidence="1">
        <dbReference type="Rhea" id="RHEA:83436"/>
    </physiologicalReaction>
</comment>
<comment type="subunit">
    <text evidence="1">Homodimer.</text>
</comment>
<comment type="similarity">
    <text evidence="1">Belongs to the class-II aminoacyl-tRNA synthetase family. EpmA subfamily.</text>
</comment>
<proteinExistence type="inferred from homology"/>